<comment type="function">
    <text evidence="1">Catalyzes the condensation reaction of fatty acid synthesis by the addition to an acyl acceptor of two carbons from malonyl-ACP. Catalyzes the first condensation reaction which initiates fatty acid synthesis and may therefore play a role in governing the total rate of fatty acid production. Possesses both acetoacetyl-ACP synthase and acetyl transacylase activities. Its substrate specificity determines the biosynthesis of branched-chain and/or straight-chain of fatty acids.</text>
</comment>
<comment type="catalytic activity">
    <reaction evidence="1">
        <text>malonyl-[ACP] + acetyl-CoA + H(+) = 3-oxobutanoyl-[ACP] + CO2 + CoA</text>
        <dbReference type="Rhea" id="RHEA:12080"/>
        <dbReference type="Rhea" id="RHEA-COMP:9623"/>
        <dbReference type="Rhea" id="RHEA-COMP:9625"/>
        <dbReference type="ChEBI" id="CHEBI:15378"/>
        <dbReference type="ChEBI" id="CHEBI:16526"/>
        <dbReference type="ChEBI" id="CHEBI:57287"/>
        <dbReference type="ChEBI" id="CHEBI:57288"/>
        <dbReference type="ChEBI" id="CHEBI:78449"/>
        <dbReference type="ChEBI" id="CHEBI:78450"/>
        <dbReference type="EC" id="2.3.1.180"/>
    </reaction>
</comment>
<comment type="pathway">
    <text evidence="1">Lipid metabolism; fatty acid biosynthesis.</text>
</comment>
<comment type="subunit">
    <text evidence="1">Homodimer.</text>
</comment>
<comment type="subcellular location">
    <subcellularLocation>
        <location evidence="1">Cytoplasm</location>
    </subcellularLocation>
</comment>
<comment type="domain">
    <text evidence="1">The last Arg residue of the ACP-binding site is essential for the weak association between ACP/AcpP and FabH.</text>
</comment>
<comment type="similarity">
    <text evidence="1">Belongs to the thiolase-like superfamily. FabH family.</text>
</comment>
<accession>A4TLS3</accession>
<feature type="chain" id="PRO_1000056449" description="Beta-ketoacyl-[acyl-carrier-protein] synthase III">
    <location>
        <begin position="1"/>
        <end position="316"/>
    </location>
</feature>
<feature type="region of interest" description="ACP-binding" evidence="1">
    <location>
        <begin position="244"/>
        <end position="248"/>
    </location>
</feature>
<feature type="active site" evidence="1">
    <location>
        <position position="112"/>
    </location>
</feature>
<feature type="active site" evidence="1">
    <location>
        <position position="243"/>
    </location>
</feature>
<feature type="active site" evidence="1">
    <location>
        <position position="273"/>
    </location>
</feature>
<protein>
    <recommendedName>
        <fullName evidence="1">Beta-ketoacyl-[acyl-carrier-protein] synthase III</fullName>
        <shortName evidence="1">Beta-ketoacyl-ACP synthase III</shortName>
        <shortName evidence="1">KAS III</shortName>
        <ecNumber evidence="1">2.3.1.180</ecNumber>
    </recommendedName>
    <alternativeName>
        <fullName evidence="1">3-oxoacyl-[acyl-carrier-protein] synthase 3</fullName>
    </alternativeName>
    <alternativeName>
        <fullName evidence="1">3-oxoacyl-[acyl-carrier-protein] synthase III</fullName>
    </alternativeName>
</protein>
<reference key="1">
    <citation type="submission" date="2007-02" db="EMBL/GenBank/DDBJ databases">
        <title>Complete sequence of chromosome of Yersinia pestis Pestoides F.</title>
        <authorList>
            <consortium name="US DOE Joint Genome Institute"/>
            <person name="Copeland A."/>
            <person name="Lucas S."/>
            <person name="Lapidus A."/>
            <person name="Barry K."/>
            <person name="Detter J.C."/>
            <person name="Glavina del Rio T."/>
            <person name="Hammon N."/>
            <person name="Israni S."/>
            <person name="Dalin E."/>
            <person name="Tice H."/>
            <person name="Pitluck S."/>
            <person name="Di Bartolo G."/>
            <person name="Chain P."/>
            <person name="Malfatti S."/>
            <person name="Shin M."/>
            <person name="Vergez L."/>
            <person name="Schmutz J."/>
            <person name="Larimer F."/>
            <person name="Land M."/>
            <person name="Hauser L."/>
            <person name="Worsham P."/>
            <person name="Chu M."/>
            <person name="Bearden S."/>
            <person name="Garcia E."/>
            <person name="Richardson P."/>
        </authorList>
    </citation>
    <scope>NUCLEOTIDE SEQUENCE [LARGE SCALE GENOMIC DNA]</scope>
    <source>
        <strain>Pestoides F</strain>
    </source>
</reference>
<organism>
    <name type="scientific">Yersinia pestis (strain Pestoides F)</name>
    <dbReference type="NCBI Taxonomy" id="386656"/>
    <lineage>
        <taxon>Bacteria</taxon>
        <taxon>Pseudomonadati</taxon>
        <taxon>Pseudomonadota</taxon>
        <taxon>Gammaproteobacteria</taxon>
        <taxon>Enterobacterales</taxon>
        <taxon>Yersiniaceae</taxon>
        <taxon>Yersinia</taxon>
    </lineage>
</organism>
<gene>
    <name evidence="1" type="primary">fabH</name>
    <name type="ordered locus">YPDSF_1850</name>
</gene>
<keyword id="KW-0012">Acyltransferase</keyword>
<keyword id="KW-0963">Cytoplasm</keyword>
<keyword id="KW-0275">Fatty acid biosynthesis</keyword>
<keyword id="KW-0276">Fatty acid metabolism</keyword>
<keyword id="KW-0444">Lipid biosynthesis</keyword>
<keyword id="KW-0443">Lipid metabolism</keyword>
<keyword id="KW-0511">Multifunctional enzyme</keyword>
<keyword id="KW-0808">Transferase</keyword>
<dbReference type="EC" id="2.3.1.180" evidence="1"/>
<dbReference type="EMBL" id="CP000668">
    <property type="protein sequence ID" value="ABP40235.1"/>
    <property type="molecule type" value="Genomic_DNA"/>
</dbReference>
<dbReference type="RefSeq" id="WP_011906295.1">
    <property type="nucleotide sequence ID" value="NZ_CP009715.1"/>
</dbReference>
<dbReference type="SMR" id="A4TLS3"/>
<dbReference type="KEGG" id="ypp:YPDSF_1850"/>
<dbReference type="PATRIC" id="fig|386656.14.peg.3305"/>
<dbReference type="UniPathway" id="UPA00094"/>
<dbReference type="GO" id="GO:0005737">
    <property type="term" value="C:cytoplasm"/>
    <property type="evidence" value="ECO:0007669"/>
    <property type="project" value="UniProtKB-SubCell"/>
</dbReference>
<dbReference type="GO" id="GO:0004315">
    <property type="term" value="F:3-oxoacyl-[acyl-carrier-protein] synthase activity"/>
    <property type="evidence" value="ECO:0007669"/>
    <property type="project" value="InterPro"/>
</dbReference>
<dbReference type="GO" id="GO:0033818">
    <property type="term" value="F:beta-ketoacyl-acyl-carrier-protein synthase III activity"/>
    <property type="evidence" value="ECO:0007669"/>
    <property type="project" value="UniProtKB-UniRule"/>
</dbReference>
<dbReference type="GO" id="GO:0006633">
    <property type="term" value="P:fatty acid biosynthetic process"/>
    <property type="evidence" value="ECO:0007669"/>
    <property type="project" value="UniProtKB-UniRule"/>
</dbReference>
<dbReference type="CDD" id="cd00830">
    <property type="entry name" value="KAS_III"/>
    <property type="match status" value="1"/>
</dbReference>
<dbReference type="FunFam" id="3.40.47.10:FF:000004">
    <property type="entry name" value="3-oxoacyl-[acyl-carrier-protein] synthase 3"/>
    <property type="match status" value="1"/>
</dbReference>
<dbReference type="Gene3D" id="3.40.47.10">
    <property type="match status" value="1"/>
</dbReference>
<dbReference type="HAMAP" id="MF_01815">
    <property type="entry name" value="FabH"/>
    <property type="match status" value="1"/>
</dbReference>
<dbReference type="InterPro" id="IPR013747">
    <property type="entry name" value="ACP_syn_III_C"/>
</dbReference>
<dbReference type="InterPro" id="IPR013751">
    <property type="entry name" value="ACP_syn_III_N"/>
</dbReference>
<dbReference type="InterPro" id="IPR004655">
    <property type="entry name" value="FabH"/>
</dbReference>
<dbReference type="InterPro" id="IPR016039">
    <property type="entry name" value="Thiolase-like"/>
</dbReference>
<dbReference type="NCBIfam" id="TIGR00747">
    <property type="entry name" value="fabH"/>
    <property type="match status" value="1"/>
</dbReference>
<dbReference type="NCBIfam" id="NF006829">
    <property type="entry name" value="PRK09352.1"/>
    <property type="match status" value="1"/>
</dbReference>
<dbReference type="PANTHER" id="PTHR43091">
    <property type="entry name" value="3-OXOACYL-[ACYL-CARRIER-PROTEIN] SYNTHASE"/>
    <property type="match status" value="1"/>
</dbReference>
<dbReference type="PANTHER" id="PTHR43091:SF1">
    <property type="entry name" value="BETA-KETOACYL-[ACYL-CARRIER-PROTEIN] SYNTHASE III, CHLOROPLASTIC"/>
    <property type="match status" value="1"/>
</dbReference>
<dbReference type="Pfam" id="PF08545">
    <property type="entry name" value="ACP_syn_III"/>
    <property type="match status" value="1"/>
</dbReference>
<dbReference type="Pfam" id="PF08541">
    <property type="entry name" value="ACP_syn_III_C"/>
    <property type="match status" value="1"/>
</dbReference>
<dbReference type="SUPFAM" id="SSF53901">
    <property type="entry name" value="Thiolase-like"/>
    <property type="match status" value="1"/>
</dbReference>
<evidence type="ECO:0000255" key="1">
    <source>
        <dbReference type="HAMAP-Rule" id="MF_01815"/>
    </source>
</evidence>
<sequence>MYTKILGTGSYLPVQVRSNADLEKMVDTSDEWIVTRTGIRERRIAGLDETVATMGFQAAEKTLEMAGIDKDDIGLIIVATTSSSHAFPSSACQVQRMLGIKDAASFDLAAACAGFTYALSVADQYVKSGAVKHAIVIGSDVLSRALDPEDRGTIILFGDGAGAVVLGASEQPGIMSTHLHADGRYGELLALPYPDRQQDQPAYVTMAGNEVFKVAVTELAHIVDETLQANNLDRTALDWLVPHQANLRIISATAKKLGMGMDKVVITLDRHGNTSAASVPSAFDEAVRDGRIQRGQLVLLEAFGGGFTWGSALVRF</sequence>
<name>FABH_YERPP</name>
<proteinExistence type="inferred from homology"/>